<reference key="1">
    <citation type="journal article" date="2005" name="J. Bacteriol.">
        <title>Whole-genome sequence analysis of Pseudomonas syringae pv. phaseolicola 1448A reveals divergence among pathovars in genes involved in virulence and transposition.</title>
        <authorList>
            <person name="Joardar V."/>
            <person name="Lindeberg M."/>
            <person name="Jackson R.W."/>
            <person name="Selengut J."/>
            <person name="Dodson R."/>
            <person name="Brinkac L.M."/>
            <person name="Daugherty S.C."/>
            <person name="DeBoy R.T."/>
            <person name="Durkin A.S."/>
            <person name="Gwinn Giglio M."/>
            <person name="Madupu R."/>
            <person name="Nelson W.C."/>
            <person name="Rosovitz M.J."/>
            <person name="Sullivan S.A."/>
            <person name="Crabtree J."/>
            <person name="Creasy T."/>
            <person name="Davidsen T.M."/>
            <person name="Haft D.H."/>
            <person name="Zafar N."/>
            <person name="Zhou L."/>
            <person name="Halpin R."/>
            <person name="Holley T."/>
            <person name="Khouri H.M."/>
            <person name="Feldblyum T.V."/>
            <person name="White O."/>
            <person name="Fraser C.M."/>
            <person name="Chatterjee A.K."/>
            <person name="Cartinhour S."/>
            <person name="Schneider D."/>
            <person name="Mansfield J.W."/>
            <person name="Collmer A."/>
            <person name="Buell R."/>
        </authorList>
    </citation>
    <scope>NUCLEOTIDE SEQUENCE [LARGE SCALE GENOMIC DNA]</scope>
    <source>
        <strain>1448A / Race 6</strain>
    </source>
</reference>
<sequence length="202" mass="21678">MNLLHLDSSILGDHSASRQLTHEVVQAYQRSHADSQVTYRDLASEALGHFSAASLAAAGTPVEARDASQQQEVDTNEATLQQFLAAEVLVIGAPMYNFTIPSQLKAWFDRIMVAGRTFRYSEAGPEGLCGGKKVIIVSTSGGLHVGQPTGAGHEELLKALFAFIGITDLQFVRAHGLAYGEEPRANAMTAAQQHIESELFAA</sequence>
<keyword id="KW-0285">Flavoprotein</keyword>
<keyword id="KW-0288">FMN</keyword>
<keyword id="KW-0520">NAD</keyword>
<keyword id="KW-0560">Oxidoreductase</keyword>
<feature type="chain" id="PRO_0000245954" description="FMN-dependent NADH:quinone oxidoreductase">
    <location>
        <begin position="1"/>
        <end position="202"/>
    </location>
</feature>
<feature type="binding site" evidence="1">
    <location>
        <position position="9"/>
    </location>
    <ligand>
        <name>FMN</name>
        <dbReference type="ChEBI" id="CHEBI:58210"/>
    </ligand>
</feature>
<feature type="binding site" evidence="1">
    <location>
        <begin position="15"/>
        <end position="17"/>
    </location>
    <ligand>
        <name>FMN</name>
        <dbReference type="ChEBI" id="CHEBI:58210"/>
    </ligand>
</feature>
<feature type="binding site" evidence="1">
    <location>
        <begin position="95"/>
        <end position="98"/>
    </location>
    <ligand>
        <name>FMN</name>
        <dbReference type="ChEBI" id="CHEBI:58210"/>
    </ligand>
</feature>
<feature type="binding site" evidence="1">
    <location>
        <begin position="139"/>
        <end position="142"/>
    </location>
    <ligand>
        <name>FMN</name>
        <dbReference type="ChEBI" id="CHEBI:58210"/>
    </ligand>
</feature>
<proteinExistence type="inferred from homology"/>
<name>AZOR_PSE14</name>
<protein>
    <recommendedName>
        <fullName evidence="1">FMN-dependent NADH:quinone oxidoreductase</fullName>
        <ecNumber evidence="1">1.6.5.-</ecNumber>
    </recommendedName>
    <alternativeName>
        <fullName evidence="1">Azo-dye reductase</fullName>
    </alternativeName>
    <alternativeName>
        <fullName evidence="1">FMN-dependent NADH-azo compound oxidoreductase</fullName>
    </alternativeName>
    <alternativeName>
        <fullName evidence="1">FMN-dependent NADH-azoreductase</fullName>
        <ecNumber evidence="1">1.7.1.17</ecNumber>
    </alternativeName>
</protein>
<comment type="function">
    <text evidence="1">Quinone reductase that provides resistance to thiol-specific stress caused by electrophilic quinones.</text>
</comment>
<comment type="function">
    <text evidence="1">Also exhibits azoreductase activity. Catalyzes the reductive cleavage of the azo bond in aromatic azo compounds to the corresponding amines.</text>
</comment>
<comment type="catalytic activity">
    <reaction evidence="1">
        <text>2 a quinone + NADH + H(+) = 2 a 1,4-benzosemiquinone + NAD(+)</text>
        <dbReference type="Rhea" id="RHEA:65952"/>
        <dbReference type="ChEBI" id="CHEBI:15378"/>
        <dbReference type="ChEBI" id="CHEBI:57540"/>
        <dbReference type="ChEBI" id="CHEBI:57945"/>
        <dbReference type="ChEBI" id="CHEBI:132124"/>
        <dbReference type="ChEBI" id="CHEBI:134225"/>
    </reaction>
</comment>
<comment type="catalytic activity">
    <reaction evidence="1">
        <text>N,N-dimethyl-1,4-phenylenediamine + anthranilate + 2 NAD(+) = 2-(4-dimethylaminophenyl)diazenylbenzoate + 2 NADH + 2 H(+)</text>
        <dbReference type="Rhea" id="RHEA:55872"/>
        <dbReference type="ChEBI" id="CHEBI:15378"/>
        <dbReference type="ChEBI" id="CHEBI:15783"/>
        <dbReference type="ChEBI" id="CHEBI:16567"/>
        <dbReference type="ChEBI" id="CHEBI:57540"/>
        <dbReference type="ChEBI" id="CHEBI:57945"/>
        <dbReference type="ChEBI" id="CHEBI:71579"/>
        <dbReference type="EC" id="1.7.1.17"/>
    </reaction>
</comment>
<comment type="cofactor">
    <cofactor evidence="1">
        <name>FMN</name>
        <dbReference type="ChEBI" id="CHEBI:58210"/>
    </cofactor>
    <text evidence="1">Binds 1 FMN per subunit.</text>
</comment>
<comment type="subunit">
    <text evidence="1">Homodimer.</text>
</comment>
<comment type="similarity">
    <text evidence="1">Belongs to the azoreductase type 1 family.</text>
</comment>
<dbReference type="EC" id="1.6.5.-" evidence="1"/>
<dbReference type="EC" id="1.7.1.17" evidence="1"/>
<dbReference type="EMBL" id="CP000058">
    <property type="protein sequence ID" value="AAZ37425.1"/>
    <property type="molecule type" value="Genomic_DNA"/>
</dbReference>
<dbReference type="RefSeq" id="WP_011168449.1">
    <property type="nucleotide sequence ID" value="NC_005773.3"/>
</dbReference>
<dbReference type="SMR" id="Q48JI0"/>
<dbReference type="KEGG" id="psp:PSPPH_2237"/>
<dbReference type="eggNOG" id="COG1182">
    <property type="taxonomic scope" value="Bacteria"/>
</dbReference>
<dbReference type="HOGENOM" id="CLU_088964_0_0_6"/>
<dbReference type="Proteomes" id="UP000000551">
    <property type="component" value="Chromosome"/>
</dbReference>
<dbReference type="GO" id="GO:0009055">
    <property type="term" value="F:electron transfer activity"/>
    <property type="evidence" value="ECO:0007669"/>
    <property type="project" value="UniProtKB-UniRule"/>
</dbReference>
<dbReference type="GO" id="GO:0010181">
    <property type="term" value="F:FMN binding"/>
    <property type="evidence" value="ECO:0007669"/>
    <property type="project" value="UniProtKB-UniRule"/>
</dbReference>
<dbReference type="GO" id="GO:0016652">
    <property type="term" value="F:oxidoreductase activity, acting on NAD(P)H as acceptor"/>
    <property type="evidence" value="ECO:0007669"/>
    <property type="project" value="UniProtKB-UniRule"/>
</dbReference>
<dbReference type="GO" id="GO:0016655">
    <property type="term" value="F:oxidoreductase activity, acting on NAD(P)H, quinone or similar compound as acceptor"/>
    <property type="evidence" value="ECO:0007669"/>
    <property type="project" value="InterPro"/>
</dbReference>
<dbReference type="FunFam" id="3.40.50.360:FF:000049">
    <property type="entry name" value="FMN-dependent NADH-azoreductase"/>
    <property type="match status" value="1"/>
</dbReference>
<dbReference type="Gene3D" id="3.40.50.360">
    <property type="match status" value="1"/>
</dbReference>
<dbReference type="HAMAP" id="MF_01216">
    <property type="entry name" value="Azoreductase_type1"/>
    <property type="match status" value="1"/>
</dbReference>
<dbReference type="InterPro" id="IPR003680">
    <property type="entry name" value="Flavodoxin_fold"/>
</dbReference>
<dbReference type="InterPro" id="IPR029039">
    <property type="entry name" value="Flavoprotein-like_sf"/>
</dbReference>
<dbReference type="InterPro" id="IPR050104">
    <property type="entry name" value="FMN-dep_NADH:Q_OxRdtase_AzoR1"/>
</dbReference>
<dbReference type="InterPro" id="IPR023048">
    <property type="entry name" value="NADH:quinone_OxRdtase_FMN_depd"/>
</dbReference>
<dbReference type="PANTHER" id="PTHR43741">
    <property type="entry name" value="FMN-DEPENDENT NADH-AZOREDUCTASE 1"/>
    <property type="match status" value="1"/>
</dbReference>
<dbReference type="PANTHER" id="PTHR43741:SF4">
    <property type="entry name" value="FMN-DEPENDENT NADH:QUINONE OXIDOREDUCTASE"/>
    <property type="match status" value="1"/>
</dbReference>
<dbReference type="Pfam" id="PF02525">
    <property type="entry name" value="Flavodoxin_2"/>
    <property type="match status" value="1"/>
</dbReference>
<dbReference type="SUPFAM" id="SSF52218">
    <property type="entry name" value="Flavoproteins"/>
    <property type="match status" value="1"/>
</dbReference>
<evidence type="ECO:0000255" key="1">
    <source>
        <dbReference type="HAMAP-Rule" id="MF_01216"/>
    </source>
</evidence>
<gene>
    <name evidence="1" type="primary">azoR</name>
    <name type="ordered locus">PSPPH_2237</name>
</gene>
<accession>Q48JI0</accession>
<organism>
    <name type="scientific">Pseudomonas savastanoi pv. phaseolicola (strain 1448A / Race 6)</name>
    <name type="common">Pseudomonas syringae pv. phaseolicola (strain 1448A / Race 6)</name>
    <dbReference type="NCBI Taxonomy" id="264730"/>
    <lineage>
        <taxon>Bacteria</taxon>
        <taxon>Pseudomonadati</taxon>
        <taxon>Pseudomonadota</taxon>
        <taxon>Gammaproteobacteria</taxon>
        <taxon>Pseudomonadales</taxon>
        <taxon>Pseudomonadaceae</taxon>
        <taxon>Pseudomonas</taxon>
    </lineage>
</organism>